<name>CDC6O_HALMA</name>
<keyword id="KW-0067">ATP-binding</keyword>
<keyword id="KW-0235">DNA replication</keyword>
<keyword id="KW-0547">Nucleotide-binding</keyword>
<keyword id="KW-0614">Plasmid</keyword>
<keyword id="KW-1185">Reference proteome</keyword>
<organism>
    <name type="scientific">Haloarcula marismortui (strain ATCC 43049 / DSM 3752 / JCM 8966 / VKM B-1809)</name>
    <name type="common">Halobacterium marismortui</name>
    <dbReference type="NCBI Taxonomy" id="272569"/>
    <lineage>
        <taxon>Archaea</taxon>
        <taxon>Methanobacteriati</taxon>
        <taxon>Methanobacteriota</taxon>
        <taxon>Stenosarchaea group</taxon>
        <taxon>Halobacteria</taxon>
        <taxon>Halobacteriales</taxon>
        <taxon>Haloarculaceae</taxon>
        <taxon>Haloarcula</taxon>
    </lineage>
</organism>
<protein>
    <recommendedName>
        <fullName evidence="1">ORC1-type DNA replication protein 15</fullName>
    </recommendedName>
</protein>
<sequence>MRRFERKQNIFRNKDALGESYQPERIEERDEEIEEYMNALQPVIDGWEPNNIFLYGNTGVGKTAVTDYLLDRLQDDVAAYDDIDLSIISLNCKTLNSSYQVAVELVNELRPSGGEISTTGYPQQTVFKKLYQELEAIGGTILIVLDEVDSIGDRDELLYELPRARANGNLDSAKVGVIGISNDFKFRDQLDPRVQDTLCERELQFPPYDATELKNILESRVEVAVTDGSTDTGVLQLCAALAARDSGSARQALDLLRLGGEIAENREAEMIKEGHIEDARSQLEQERVEEGMRELTTHGRLALLAVISKAAKEETPCRTRDLYEEYRSLCESSETDALGQRSLHNHLSDLRMLGILSAHENRSGSRGNYYNYELDVPFTSAIEAMSDVLHLTTEIDTIRDIAAMNNVG</sequence>
<feature type="chain" id="PRO_0000150992" description="ORC1-type DNA replication protein 15">
    <location>
        <begin position="1"/>
        <end position="408"/>
    </location>
</feature>
<feature type="binding site" evidence="1">
    <location>
        <begin position="60"/>
        <end position="64"/>
    </location>
    <ligand>
        <name>ATP</name>
        <dbReference type="ChEBI" id="CHEBI:30616"/>
    </ligand>
</feature>
<feature type="binding site" evidence="1">
    <location>
        <position position="208"/>
    </location>
    <ligand>
        <name>ATP</name>
        <dbReference type="ChEBI" id="CHEBI:30616"/>
    </ligand>
</feature>
<feature type="binding site" evidence="1">
    <location>
        <position position="220"/>
    </location>
    <ligand>
        <name>ATP</name>
        <dbReference type="ChEBI" id="CHEBI:30616"/>
    </ligand>
</feature>
<dbReference type="EMBL" id="AY596294">
    <property type="protein sequence ID" value="AAV44451.1"/>
    <property type="molecule type" value="Genomic_DNA"/>
</dbReference>
<dbReference type="RefSeq" id="WP_011222295.1">
    <property type="nucleotide sequence ID" value="NC_006393.1"/>
</dbReference>
<dbReference type="SMR" id="Q5V7I2"/>
<dbReference type="EnsemblBacteria" id="AAV44451">
    <property type="protein sequence ID" value="AAV44451"/>
    <property type="gene ID" value="pNG5027"/>
</dbReference>
<dbReference type="GeneID" id="40150744"/>
<dbReference type="KEGG" id="hma:pNG5027"/>
<dbReference type="PATRIC" id="fig|272569.17.peg.195"/>
<dbReference type="HOGENOM" id="CLU_025112_3_1_2"/>
<dbReference type="Proteomes" id="UP000001169">
    <property type="component" value="Plasmid pNG500"/>
</dbReference>
<dbReference type="GO" id="GO:0005524">
    <property type="term" value="F:ATP binding"/>
    <property type="evidence" value="ECO:0007669"/>
    <property type="project" value="UniProtKB-UniRule"/>
</dbReference>
<dbReference type="GO" id="GO:0016887">
    <property type="term" value="F:ATP hydrolysis activity"/>
    <property type="evidence" value="ECO:0007669"/>
    <property type="project" value="InterPro"/>
</dbReference>
<dbReference type="GO" id="GO:0006260">
    <property type="term" value="P:DNA replication"/>
    <property type="evidence" value="ECO:0007669"/>
    <property type="project" value="UniProtKB-UniRule"/>
</dbReference>
<dbReference type="CDD" id="cd00009">
    <property type="entry name" value="AAA"/>
    <property type="match status" value="1"/>
</dbReference>
<dbReference type="CDD" id="cd08768">
    <property type="entry name" value="Cdc6_C"/>
    <property type="match status" value="1"/>
</dbReference>
<dbReference type="FunFam" id="1.10.8.60:FF:000073">
    <property type="entry name" value="ORC1-type DNA replication protein"/>
    <property type="match status" value="1"/>
</dbReference>
<dbReference type="FunFam" id="3.40.50.300:FF:000930">
    <property type="entry name" value="ORC1-type DNA replication protein"/>
    <property type="match status" value="1"/>
</dbReference>
<dbReference type="Gene3D" id="1.10.8.60">
    <property type="match status" value="1"/>
</dbReference>
<dbReference type="Gene3D" id="3.40.50.300">
    <property type="entry name" value="P-loop containing nucleotide triphosphate hydrolases"/>
    <property type="match status" value="1"/>
</dbReference>
<dbReference type="Gene3D" id="1.10.10.10">
    <property type="entry name" value="Winged helix-like DNA-binding domain superfamily/Winged helix DNA-binding domain"/>
    <property type="match status" value="1"/>
</dbReference>
<dbReference type="HAMAP" id="MF_01407">
    <property type="entry name" value="ORC1_type_DNA_replic_protein"/>
    <property type="match status" value="1"/>
</dbReference>
<dbReference type="InterPro" id="IPR003593">
    <property type="entry name" value="AAA+_ATPase"/>
</dbReference>
<dbReference type="InterPro" id="IPR049945">
    <property type="entry name" value="AAA_22"/>
</dbReference>
<dbReference type="InterPro" id="IPR015163">
    <property type="entry name" value="Cdc6_C"/>
</dbReference>
<dbReference type="InterPro" id="IPR055237">
    <property type="entry name" value="Cdc6_lid"/>
</dbReference>
<dbReference type="InterPro" id="IPR050311">
    <property type="entry name" value="ORC1/CDC6"/>
</dbReference>
<dbReference type="InterPro" id="IPR014277">
    <property type="entry name" value="Orc1/Cdc6_arc"/>
</dbReference>
<dbReference type="InterPro" id="IPR027417">
    <property type="entry name" value="P-loop_NTPase"/>
</dbReference>
<dbReference type="InterPro" id="IPR036388">
    <property type="entry name" value="WH-like_DNA-bd_sf"/>
</dbReference>
<dbReference type="InterPro" id="IPR036390">
    <property type="entry name" value="WH_DNA-bd_sf"/>
</dbReference>
<dbReference type="NCBIfam" id="TIGR02928">
    <property type="entry name" value="orc1/cdc6 family replication initiation protein"/>
    <property type="match status" value="1"/>
</dbReference>
<dbReference type="PANTHER" id="PTHR10763">
    <property type="entry name" value="CELL DIVISION CONTROL PROTEIN 6-RELATED"/>
    <property type="match status" value="1"/>
</dbReference>
<dbReference type="PANTHER" id="PTHR10763:SF22">
    <property type="entry name" value="ORC1-TYPE DNA REPLICATION PROTEIN"/>
    <property type="match status" value="1"/>
</dbReference>
<dbReference type="Pfam" id="PF13401">
    <property type="entry name" value="AAA_22"/>
    <property type="match status" value="1"/>
</dbReference>
<dbReference type="Pfam" id="PF09079">
    <property type="entry name" value="Cdc6_C"/>
    <property type="match status" value="1"/>
</dbReference>
<dbReference type="Pfam" id="PF22703">
    <property type="entry name" value="Cdc6_lid"/>
    <property type="match status" value="1"/>
</dbReference>
<dbReference type="SMART" id="SM00382">
    <property type="entry name" value="AAA"/>
    <property type="match status" value="1"/>
</dbReference>
<dbReference type="SMART" id="SM01074">
    <property type="entry name" value="Cdc6_C"/>
    <property type="match status" value="1"/>
</dbReference>
<dbReference type="SUPFAM" id="SSF52540">
    <property type="entry name" value="P-loop containing nucleoside triphosphate hydrolases"/>
    <property type="match status" value="1"/>
</dbReference>
<dbReference type="SUPFAM" id="SSF46785">
    <property type="entry name" value="Winged helix' DNA-binding domain"/>
    <property type="match status" value="1"/>
</dbReference>
<proteinExistence type="inferred from homology"/>
<accession>Q5V7I2</accession>
<comment type="function">
    <text evidence="1">Involved in regulation of DNA replication.</text>
</comment>
<comment type="similarity">
    <text evidence="1">Belongs to the CDC6/cdc18 family.</text>
</comment>
<evidence type="ECO:0000255" key="1">
    <source>
        <dbReference type="HAMAP-Rule" id="MF_01407"/>
    </source>
</evidence>
<gene>
    <name type="primary">cdc6o</name>
    <name type="ordered locus">pNG5027</name>
</gene>
<reference key="1">
    <citation type="journal article" date="2004" name="Genome Res.">
        <title>Genome sequence of Haloarcula marismortui: a halophilic archaeon from the Dead Sea.</title>
        <authorList>
            <person name="Baliga N.S."/>
            <person name="Bonneau R."/>
            <person name="Facciotti M.T."/>
            <person name="Pan M."/>
            <person name="Glusman G."/>
            <person name="Deutsch E.W."/>
            <person name="Shannon P."/>
            <person name="Chiu Y."/>
            <person name="Weng R.S."/>
            <person name="Gan R.R."/>
            <person name="Hung P."/>
            <person name="Date S.V."/>
            <person name="Marcotte E."/>
            <person name="Hood L."/>
            <person name="Ng W.V."/>
        </authorList>
    </citation>
    <scope>NUCLEOTIDE SEQUENCE [LARGE SCALE GENOMIC DNA]</scope>
    <source>
        <strain>ATCC 43049 / DSM 3752 / JCM 8966 / VKM B-1809</strain>
    </source>
</reference>
<geneLocation type="plasmid">
    <name>pNG500</name>
</geneLocation>